<proteinExistence type="inferred from homology"/>
<comment type="function">
    <text evidence="1">NodD regulates the expression of the nodABCFE genes which encode other nodulation proteins. NodD is also a negative regulator of its own expression. Binds flavonoids as inducers (By similarity).</text>
</comment>
<comment type="similarity">
    <text evidence="3">Belongs to the LysR transcriptional regulatory family.</text>
</comment>
<organism>
    <name type="scientific">Bradyrhizobium diazoefficiens (strain JCM 10833 / BCRC 13528 / IAM 13628 / NBRC 14792 / USDA 110)</name>
    <dbReference type="NCBI Taxonomy" id="224911"/>
    <lineage>
        <taxon>Bacteria</taxon>
        <taxon>Pseudomonadati</taxon>
        <taxon>Pseudomonadota</taxon>
        <taxon>Alphaproteobacteria</taxon>
        <taxon>Hyphomicrobiales</taxon>
        <taxon>Nitrobacteraceae</taxon>
        <taxon>Bradyrhizobium</taxon>
    </lineage>
</organism>
<name>NODD1_BRADU</name>
<accession>Q45264</accession>
<accession>Q93GU3</accession>
<evidence type="ECO:0000250" key="1"/>
<evidence type="ECO:0000255" key="2">
    <source>
        <dbReference type="PROSITE-ProRule" id="PRU00253"/>
    </source>
</evidence>
<evidence type="ECO:0000305" key="3"/>
<reference key="1">
    <citation type="journal article" date="1992" name="Mol. Plant Microbe Interact.">
        <title>Structural and functional analysis of two different nodD genes in Bradyrhizobium japonicum USDA110.</title>
        <authorList>
            <person name="Goettfert M."/>
            <person name="Holzhauser D."/>
            <person name="Bani D."/>
            <person name="Hennecke H."/>
        </authorList>
    </citation>
    <scope>NUCLEOTIDE SEQUENCE [GENOMIC DNA]</scope>
    <source>
        <strain>JCM 10833 / BCRC 13528 / IAM 13628 / NBRC 14792 / USDA 110</strain>
    </source>
</reference>
<reference key="2">
    <citation type="journal article" date="2001" name="J. Bacteriol.">
        <title>Potential symbiosis-specific genes uncovered by sequencing a 410-kb DNA region of the Bradyrhizobium japonicum chromosome.</title>
        <authorList>
            <person name="Goettfert M."/>
            <person name="Roethlisberger S."/>
            <person name="Kuendig C."/>
            <person name="Beck C."/>
            <person name="Marty R."/>
            <person name="Hennecke H."/>
        </authorList>
    </citation>
    <scope>NUCLEOTIDE SEQUENCE [GENOMIC DNA]</scope>
    <source>
        <strain>USDA 110spc4</strain>
    </source>
</reference>
<reference key="3">
    <citation type="journal article" date="2002" name="DNA Res.">
        <title>Complete genomic sequence of nitrogen-fixing symbiotic bacterium Bradyrhizobium japonicum USDA110.</title>
        <authorList>
            <person name="Kaneko T."/>
            <person name="Nakamura Y."/>
            <person name="Sato S."/>
            <person name="Minamisawa K."/>
            <person name="Uchiumi T."/>
            <person name="Sasamoto S."/>
            <person name="Watanabe A."/>
            <person name="Idesawa K."/>
            <person name="Iriguchi M."/>
            <person name="Kawashima K."/>
            <person name="Kohara M."/>
            <person name="Matsumoto M."/>
            <person name="Shimpo S."/>
            <person name="Tsuruoka H."/>
            <person name="Wada T."/>
            <person name="Yamada M."/>
            <person name="Tabata S."/>
        </authorList>
    </citation>
    <scope>NUCLEOTIDE SEQUENCE [LARGE SCALE GENOMIC DNA]</scope>
    <source>
        <strain>JCM 10833 / BCRC 13528 / IAM 13628 / NBRC 14792 / USDA 110</strain>
    </source>
</reference>
<reference key="4">
    <citation type="submission" date="2001-10" db="EMBL/GenBank/DDBJ databases">
        <title>Abilities of flavonoids to affect nod gene expression in Thai soybean Bradyrhizobium with reference to USDA strains of B. japonicum and B. elkanii.</title>
        <authorList>
            <person name="Yokoyama T."/>
            <person name="Ando S."/>
        </authorList>
    </citation>
    <scope>NUCLEOTIDE SEQUENCE [GENOMIC DNA] OF 13-301</scope>
    <source>
        <strain>JCM 10833 / BCRC 13528 / IAM 13628 / NBRC 14792 / USDA 110</strain>
    </source>
</reference>
<feature type="chain" id="PRO_0000105703" description="Nodulation protein D 1">
    <location>
        <begin position="1"/>
        <end position="314"/>
    </location>
</feature>
<feature type="domain" description="HTH lysR-type" evidence="2">
    <location>
        <begin position="6"/>
        <end position="63"/>
    </location>
</feature>
<feature type="DNA-binding region" description="H-T-H motif" evidence="2">
    <location>
        <begin position="23"/>
        <end position="42"/>
    </location>
</feature>
<dbReference type="EMBL" id="M81825">
    <property type="protein sequence ID" value="AAA26234.1"/>
    <property type="molecule type" value="Genomic_DNA"/>
</dbReference>
<dbReference type="EMBL" id="AH010242">
    <property type="protein sequence ID" value="AAG60994.1"/>
    <property type="molecule type" value="Genomic_DNA"/>
</dbReference>
<dbReference type="EMBL" id="BA000040">
    <property type="protein sequence ID" value="BAC47288.1"/>
    <property type="molecule type" value="Genomic_DNA"/>
</dbReference>
<dbReference type="EMBL" id="AB073136">
    <property type="protein sequence ID" value="BAB70604.1"/>
    <property type="molecule type" value="Genomic_DNA"/>
</dbReference>
<dbReference type="RefSeq" id="NP_768663.1">
    <property type="nucleotide sequence ID" value="NC_004463.1"/>
</dbReference>
<dbReference type="RefSeq" id="WP_011084820.1">
    <property type="nucleotide sequence ID" value="NC_004463.1"/>
</dbReference>
<dbReference type="SMR" id="Q45264"/>
<dbReference type="STRING" id="224911.AAV28_06950"/>
<dbReference type="EnsemblBacteria" id="BAC47288">
    <property type="protein sequence ID" value="BAC47288"/>
    <property type="gene ID" value="BAC47288"/>
</dbReference>
<dbReference type="GeneID" id="46489118"/>
<dbReference type="KEGG" id="bja:bll2023"/>
<dbReference type="PATRIC" id="fig|224911.44.peg.1525"/>
<dbReference type="eggNOG" id="COG0583">
    <property type="taxonomic scope" value="Bacteria"/>
</dbReference>
<dbReference type="HOGENOM" id="CLU_039613_39_0_5"/>
<dbReference type="InParanoid" id="Q45264"/>
<dbReference type="OrthoDB" id="8339333at2"/>
<dbReference type="PhylomeDB" id="Q45264"/>
<dbReference type="Proteomes" id="UP000002526">
    <property type="component" value="Chromosome"/>
</dbReference>
<dbReference type="GO" id="GO:0003677">
    <property type="term" value="F:DNA binding"/>
    <property type="evidence" value="ECO:0007669"/>
    <property type="project" value="UniProtKB-KW"/>
</dbReference>
<dbReference type="GO" id="GO:0003700">
    <property type="term" value="F:DNA-binding transcription factor activity"/>
    <property type="evidence" value="ECO:0007669"/>
    <property type="project" value="InterPro"/>
</dbReference>
<dbReference type="GO" id="GO:0006355">
    <property type="term" value="P:regulation of DNA-templated transcription"/>
    <property type="evidence" value="ECO:0000318"/>
    <property type="project" value="GO_Central"/>
</dbReference>
<dbReference type="CDD" id="cd08462">
    <property type="entry name" value="PBP2_NodD"/>
    <property type="match status" value="1"/>
</dbReference>
<dbReference type="Gene3D" id="3.40.190.10">
    <property type="entry name" value="Periplasmic binding protein-like II"/>
    <property type="match status" value="2"/>
</dbReference>
<dbReference type="Gene3D" id="1.10.10.10">
    <property type="entry name" value="Winged helix-like DNA-binding domain superfamily/Winged helix DNA-binding domain"/>
    <property type="match status" value="1"/>
</dbReference>
<dbReference type="InterPro" id="IPR050389">
    <property type="entry name" value="LysR-type_TF"/>
</dbReference>
<dbReference type="InterPro" id="IPR005119">
    <property type="entry name" value="LysR_subst-bd"/>
</dbReference>
<dbReference type="InterPro" id="IPR037416">
    <property type="entry name" value="NodD_PBP2"/>
</dbReference>
<dbReference type="InterPro" id="IPR000847">
    <property type="entry name" value="Tscrpt_reg_HTH_LysR"/>
</dbReference>
<dbReference type="InterPro" id="IPR036388">
    <property type="entry name" value="WH-like_DNA-bd_sf"/>
</dbReference>
<dbReference type="InterPro" id="IPR036390">
    <property type="entry name" value="WH_DNA-bd_sf"/>
</dbReference>
<dbReference type="PANTHER" id="PTHR30118:SF6">
    <property type="entry name" value="HTH-TYPE TRANSCRIPTIONAL REGULATOR LEUO"/>
    <property type="match status" value="1"/>
</dbReference>
<dbReference type="PANTHER" id="PTHR30118">
    <property type="entry name" value="HTH-TYPE TRANSCRIPTIONAL REGULATOR LEUO-RELATED"/>
    <property type="match status" value="1"/>
</dbReference>
<dbReference type="Pfam" id="PF00126">
    <property type="entry name" value="HTH_1"/>
    <property type="match status" value="1"/>
</dbReference>
<dbReference type="Pfam" id="PF03466">
    <property type="entry name" value="LysR_substrate"/>
    <property type="match status" value="1"/>
</dbReference>
<dbReference type="PRINTS" id="PR00039">
    <property type="entry name" value="HTHLYSR"/>
</dbReference>
<dbReference type="SUPFAM" id="SSF53850">
    <property type="entry name" value="Periplasmic binding protein-like II"/>
    <property type="match status" value="1"/>
</dbReference>
<dbReference type="SUPFAM" id="SSF46785">
    <property type="entry name" value="Winged helix' DNA-binding domain"/>
    <property type="match status" value="1"/>
</dbReference>
<dbReference type="PROSITE" id="PS50931">
    <property type="entry name" value="HTH_LYSR"/>
    <property type="match status" value="1"/>
</dbReference>
<sequence length="314" mass="35855">MRFKGLDLNLLVALDAVMTARNLTAAARKINLSQPAMSAAIARLRTYFRDELFTMRGRELVPTPGAEALAGPVREALLHIQLSIISRDALDPAQSSRRFRVILSDFMTIVFFRRIVDRMAQEAPAVRFELLPFSDEPDDLLRRGEVDFLILPELFMSSAHPKATLFDESLVCVGCRANKQLSRQLTFEQYISMGHVTAKFGRALRPNLEEWFLLEHGLRRRIEVVVQGFSLIPPLLLDTSRIGTMPLRLARHFEKRMPLRIIQPPLPLPTFTEALQWPSFHNTDPASIWMRRILLEEASNMASGDQEPPTRRRC</sequence>
<gene>
    <name type="primary">nodD1</name>
    <name type="ordered locus">bll2023</name>
</gene>
<protein>
    <recommendedName>
        <fullName>Nodulation protein D 1</fullName>
    </recommendedName>
</protein>
<keyword id="KW-0010">Activator</keyword>
<keyword id="KW-0238">DNA-binding</keyword>
<keyword id="KW-0536">Nodulation</keyword>
<keyword id="KW-1185">Reference proteome</keyword>
<keyword id="KW-0678">Repressor</keyword>
<keyword id="KW-0804">Transcription</keyword>
<keyword id="KW-0805">Transcription regulation</keyword>